<feature type="chain" id="PRO_1000046394" description="Phosphopentomutase">
    <location>
        <begin position="1"/>
        <end position="404"/>
    </location>
</feature>
<feature type="binding site" evidence="1">
    <location>
        <position position="10"/>
    </location>
    <ligand>
        <name>Mn(2+)</name>
        <dbReference type="ChEBI" id="CHEBI:29035"/>
        <label>1</label>
    </ligand>
</feature>
<feature type="binding site" evidence="1">
    <location>
        <position position="303"/>
    </location>
    <ligand>
        <name>Mn(2+)</name>
        <dbReference type="ChEBI" id="CHEBI:29035"/>
        <label>2</label>
    </ligand>
</feature>
<feature type="binding site" evidence="1">
    <location>
        <position position="308"/>
    </location>
    <ligand>
        <name>Mn(2+)</name>
        <dbReference type="ChEBI" id="CHEBI:29035"/>
        <label>2</label>
    </ligand>
</feature>
<feature type="binding site" evidence="1">
    <location>
        <position position="344"/>
    </location>
    <ligand>
        <name>Mn(2+)</name>
        <dbReference type="ChEBI" id="CHEBI:29035"/>
        <label>1</label>
    </ligand>
</feature>
<feature type="binding site" evidence="1">
    <location>
        <position position="345"/>
    </location>
    <ligand>
        <name>Mn(2+)</name>
        <dbReference type="ChEBI" id="CHEBI:29035"/>
        <label>1</label>
    </ligand>
</feature>
<feature type="binding site" evidence="1">
    <location>
        <position position="356"/>
    </location>
    <ligand>
        <name>Mn(2+)</name>
        <dbReference type="ChEBI" id="CHEBI:29035"/>
        <label>2</label>
    </ligand>
</feature>
<protein>
    <recommendedName>
        <fullName evidence="1">Phosphopentomutase</fullName>
        <ecNumber evidence="1">5.4.2.7</ecNumber>
    </recommendedName>
    <alternativeName>
        <fullName evidence="1">Phosphodeoxyribomutase</fullName>
    </alternativeName>
</protein>
<reference key="1">
    <citation type="submission" date="2007-02" db="EMBL/GenBank/DDBJ databases">
        <title>Complete sequence of chromosome of Shewanella baltica OS155.</title>
        <authorList>
            <consortium name="US DOE Joint Genome Institute"/>
            <person name="Copeland A."/>
            <person name="Lucas S."/>
            <person name="Lapidus A."/>
            <person name="Barry K."/>
            <person name="Detter J.C."/>
            <person name="Glavina del Rio T."/>
            <person name="Hammon N."/>
            <person name="Israni S."/>
            <person name="Dalin E."/>
            <person name="Tice H."/>
            <person name="Pitluck S."/>
            <person name="Sims D.R."/>
            <person name="Brettin T."/>
            <person name="Bruce D."/>
            <person name="Han C."/>
            <person name="Tapia R."/>
            <person name="Brainard J."/>
            <person name="Schmutz J."/>
            <person name="Larimer F."/>
            <person name="Land M."/>
            <person name="Hauser L."/>
            <person name="Kyrpides N."/>
            <person name="Mikhailova N."/>
            <person name="Brettar I."/>
            <person name="Klappenbach J."/>
            <person name="Konstantinidis K."/>
            <person name="Rodrigues J."/>
            <person name="Tiedje J."/>
            <person name="Richardson P."/>
        </authorList>
    </citation>
    <scope>NUCLEOTIDE SEQUENCE [LARGE SCALE GENOMIC DNA]</scope>
    <source>
        <strain>OS155 / ATCC BAA-1091</strain>
    </source>
</reference>
<name>DEOB_SHEB5</name>
<evidence type="ECO:0000255" key="1">
    <source>
        <dbReference type="HAMAP-Rule" id="MF_00740"/>
    </source>
</evidence>
<comment type="function">
    <text evidence="1">Isomerase that catalyzes the conversion of deoxy-ribose 1-phosphate (dRib-1-P) and ribose 1-phosphate (Rib-1-P) to deoxy-ribose 5-phosphate (dRib-5-P) and ribose 5-phosphate (Rib-5-P), respectively.</text>
</comment>
<comment type="catalytic activity">
    <reaction evidence="1">
        <text>2-deoxy-alpha-D-ribose 1-phosphate = 2-deoxy-D-ribose 5-phosphate</text>
        <dbReference type="Rhea" id="RHEA:27658"/>
        <dbReference type="ChEBI" id="CHEBI:57259"/>
        <dbReference type="ChEBI" id="CHEBI:62877"/>
        <dbReference type="EC" id="5.4.2.7"/>
    </reaction>
</comment>
<comment type="catalytic activity">
    <reaction evidence="1">
        <text>alpha-D-ribose 1-phosphate = D-ribose 5-phosphate</text>
        <dbReference type="Rhea" id="RHEA:18793"/>
        <dbReference type="ChEBI" id="CHEBI:57720"/>
        <dbReference type="ChEBI" id="CHEBI:78346"/>
        <dbReference type="EC" id="5.4.2.7"/>
    </reaction>
</comment>
<comment type="cofactor">
    <cofactor evidence="1">
        <name>Mn(2+)</name>
        <dbReference type="ChEBI" id="CHEBI:29035"/>
    </cofactor>
    <text evidence="1">Binds 2 manganese ions.</text>
</comment>
<comment type="pathway">
    <text evidence="1">Carbohydrate degradation; 2-deoxy-D-ribose 1-phosphate degradation; D-glyceraldehyde 3-phosphate and acetaldehyde from 2-deoxy-alpha-D-ribose 1-phosphate: step 1/2.</text>
</comment>
<comment type="subcellular location">
    <subcellularLocation>
        <location evidence="1">Cytoplasm</location>
    </subcellularLocation>
</comment>
<comment type="similarity">
    <text evidence="1">Belongs to the phosphopentomutase family.</text>
</comment>
<sequence>MKRTIIMMLDSFGVGASADAASFGDVGSDTFGHIAKACAEGKADIGREGPLKLPNLARLGLGHAAMESTGAFAPGFGDNVELIGAYGHAQELSSGKDTPSGHWEMAGVPVLFEWGYFSEHQNSFPKELTDKILARAGLDGFLGNCHASGTTILEELGEEHMRSGMPIFYTSADSVFQIACHEETFGLDNLYRLCEITREELEPYNIGRVIARPFDGTGPSDFARTGNRKDYSLAPPAKTVLDKLNEAGGEVVSVGKIADIYAYCGITKKVKANGLEALFDATLAEVKSAGDNTIVFTNFVDFDSHYGHRRDVAGYAKGLEYFDARLPEMLALLGEDDLLILTADHGCDPTWQGTDHTREYVPVLAFGAGLKAGSLGRRKSFADIGQSIASHFKLEPMAYGESFL</sequence>
<organism>
    <name type="scientific">Shewanella baltica (strain OS155 / ATCC BAA-1091)</name>
    <dbReference type="NCBI Taxonomy" id="325240"/>
    <lineage>
        <taxon>Bacteria</taxon>
        <taxon>Pseudomonadati</taxon>
        <taxon>Pseudomonadota</taxon>
        <taxon>Gammaproteobacteria</taxon>
        <taxon>Alteromonadales</taxon>
        <taxon>Shewanellaceae</taxon>
        <taxon>Shewanella</taxon>
    </lineage>
</organism>
<gene>
    <name evidence="1" type="primary">deoB</name>
    <name type="ordered locus">Sbal_3225</name>
</gene>
<proteinExistence type="inferred from homology"/>
<dbReference type="EC" id="5.4.2.7" evidence="1"/>
<dbReference type="EMBL" id="CP000563">
    <property type="protein sequence ID" value="ABN62705.1"/>
    <property type="molecule type" value="Genomic_DNA"/>
</dbReference>
<dbReference type="RefSeq" id="WP_006082702.1">
    <property type="nucleotide sequence ID" value="NC_009052.1"/>
</dbReference>
<dbReference type="SMR" id="A3D7J2"/>
<dbReference type="STRING" id="325240.Sbal_3225"/>
<dbReference type="KEGG" id="sbl:Sbal_3225"/>
<dbReference type="HOGENOM" id="CLU_053861_0_0_6"/>
<dbReference type="OrthoDB" id="9769930at2"/>
<dbReference type="UniPathway" id="UPA00002">
    <property type="reaction ID" value="UER00467"/>
</dbReference>
<dbReference type="Proteomes" id="UP000001557">
    <property type="component" value="Chromosome"/>
</dbReference>
<dbReference type="GO" id="GO:0005829">
    <property type="term" value="C:cytosol"/>
    <property type="evidence" value="ECO:0007669"/>
    <property type="project" value="TreeGrafter"/>
</dbReference>
<dbReference type="GO" id="GO:0000287">
    <property type="term" value="F:magnesium ion binding"/>
    <property type="evidence" value="ECO:0007669"/>
    <property type="project" value="InterPro"/>
</dbReference>
<dbReference type="GO" id="GO:0030145">
    <property type="term" value="F:manganese ion binding"/>
    <property type="evidence" value="ECO:0007669"/>
    <property type="project" value="UniProtKB-UniRule"/>
</dbReference>
<dbReference type="GO" id="GO:0008973">
    <property type="term" value="F:phosphopentomutase activity"/>
    <property type="evidence" value="ECO:0007669"/>
    <property type="project" value="UniProtKB-UniRule"/>
</dbReference>
<dbReference type="GO" id="GO:0006018">
    <property type="term" value="P:2-deoxyribose 1-phosphate catabolic process"/>
    <property type="evidence" value="ECO:0007669"/>
    <property type="project" value="UniProtKB-UniRule"/>
</dbReference>
<dbReference type="GO" id="GO:0006015">
    <property type="term" value="P:5-phosphoribose 1-diphosphate biosynthetic process"/>
    <property type="evidence" value="ECO:0007669"/>
    <property type="project" value="UniProtKB-UniPathway"/>
</dbReference>
<dbReference type="GO" id="GO:0043094">
    <property type="term" value="P:metabolic compound salvage"/>
    <property type="evidence" value="ECO:0007669"/>
    <property type="project" value="InterPro"/>
</dbReference>
<dbReference type="GO" id="GO:0009117">
    <property type="term" value="P:nucleotide metabolic process"/>
    <property type="evidence" value="ECO:0007669"/>
    <property type="project" value="InterPro"/>
</dbReference>
<dbReference type="CDD" id="cd16009">
    <property type="entry name" value="PPM"/>
    <property type="match status" value="1"/>
</dbReference>
<dbReference type="FunFam" id="3.30.70.1250:FF:000001">
    <property type="entry name" value="Phosphopentomutase"/>
    <property type="match status" value="1"/>
</dbReference>
<dbReference type="Gene3D" id="3.40.720.10">
    <property type="entry name" value="Alkaline Phosphatase, subunit A"/>
    <property type="match status" value="1"/>
</dbReference>
<dbReference type="Gene3D" id="3.30.70.1250">
    <property type="entry name" value="Phosphopentomutase"/>
    <property type="match status" value="1"/>
</dbReference>
<dbReference type="HAMAP" id="MF_00740">
    <property type="entry name" value="Phosphopentomut"/>
    <property type="match status" value="1"/>
</dbReference>
<dbReference type="InterPro" id="IPR017850">
    <property type="entry name" value="Alkaline_phosphatase_core_sf"/>
</dbReference>
<dbReference type="InterPro" id="IPR010045">
    <property type="entry name" value="DeoB"/>
</dbReference>
<dbReference type="InterPro" id="IPR006124">
    <property type="entry name" value="Metalloenzyme"/>
</dbReference>
<dbReference type="InterPro" id="IPR024052">
    <property type="entry name" value="Phosphopentomutase_DeoB_cap_sf"/>
</dbReference>
<dbReference type="NCBIfam" id="TIGR01696">
    <property type="entry name" value="deoB"/>
    <property type="match status" value="1"/>
</dbReference>
<dbReference type="NCBIfam" id="NF003766">
    <property type="entry name" value="PRK05362.1"/>
    <property type="match status" value="1"/>
</dbReference>
<dbReference type="PANTHER" id="PTHR21110">
    <property type="entry name" value="PHOSPHOPENTOMUTASE"/>
    <property type="match status" value="1"/>
</dbReference>
<dbReference type="PANTHER" id="PTHR21110:SF0">
    <property type="entry name" value="PHOSPHOPENTOMUTASE"/>
    <property type="match status" value="1"/>
</dbReference>
<dbReference type="Pfam" id="PF01676">
    <property type="entry name" value="Metalloenzyme"/>
    <property type="match status" value="1"/>
</dbReference>
<dbReference type="PIRSF" id="PIRSF001491">
    <property type="entry name" value="Ppentomutase"/>
    <property type="match status" value="1"/>
</dbReference>
<dbReference type="SUPFAM" id="SSF53649">
    <property type="entry name" value="Alkaline phosphatase-like"/>
    <property type="match status" value="1"/>
</dbReference>
<dbReference type="SUPFAM" id="SSF143856">
    <property type="entry name" value="DeoB insert domain-like"/>
    <property type="match status" value="1"/>
</dbReference>
<accession>A3D7J2</accession>
<keyword id="KW-0963">Cytoplasm</keyword>
<keyword id="KW-0413">Isomerase</keyword>
<keyword id="KW-0464">Manganese</keyword>
<keyword id="KW-0479">Metal-binding</keyword>
<keyword id="KW-1185">Reference proteome</keyword>